<gene>
    <name evidence="1" type="primary">dnaK</name>
    <name type="ordered locus">CRP_062</name>
</gene>
<proteinExistence type="inferred from homology"/>
<accession>Q05FS8</accession>
<comment type="function">
    <text evidence="1">Acts as a chaperone.</text>
</comment>
<comment type="induction">
    <text evidence="1">By stress conditions e.g. heat shock.</text>
</comment>
<comment type="similarity">
    <text evidence="1">Belongs to the heat shock protein 70 family.</text>
</comment>
<dbReference type="EMBL" id="AP009180">
    <property type="protein sequence ID" value="BAF35093.1"/>
    <property type="molecule type" value="Genomic_DNA"/>
</dbReference>
<dbReference type="RefSeq" id="WP_011672285.1">
    <property type="nucleotide sequence ID" value="NC_008512.1"/>
</dbReference>
<dbReference type="SMR" id="Q05FS8"/>
<dbReference type="STRING" id="387662.CRP_062"/>
<dbReference type="KEGG" id="crp:CRP_062"/>
<dbReference type="HOGENOM" id="CLU_005965_2_1_6"/>
<dbReference type="OrthoDB" id="9766019at2"/>
<dbReference type="Proteomes" id="UP000000777">
    <property type="component" value="Chromosome"/>
</dbReference>
<dbReference type="GO" id="GO:0005524">
    <property type="term" value="F:ATP binding"/>
    <property type="evidence" value="ECO:0007669"/>
    <property type="project" value="UniProtKB-UniRule"/>
</dbReference>
<dbReference type="GO" id="GO:0140662">
    <property type="term" value="F:ATP-dependent protein folding chaperone"/>
    <property type="evidence" value="ECO:0007669"/>
    <property type="project" value="InterPro"/>
</dbReference>
<dbReference type="GO" id="GO:0051082">
    <property type="term" value="F:unfolded protein binding"/>
    <property type="evidence" value="ECO:0007669"/>
    <property type="project" value="InterPro"/>
</dbReference>
<dbReference type="CDD" id="cd10234">
    <property type="entry name" value="ASKHA_NBD_HSP70_DnaK-like"/>
    <property type="match status" value="1"/>
</dbReference>
<dbReference type="FunFam" id="2.60.34.10:FF:000014">
    <property type="entry name" value="Chaperone protein DnaK HSP70"/>
    <property type="match status" value="1"/>
</dbReference>
<dbReference type="FunFam" id="3.30.420.40:FF:000004">
    <property type="entry name" value="Molecular chaperone DnaK"/>
    <property type="match status" value="1"/>
</dbReference>
<dbReference type="FunFam" id="3.90.640.10:FF:000003">
    <property type="entry name" value="Molecular chaperone DnaK"/>
    <property type="match status" value="1"/>
</dbReference>
<dbReference type="Gene3D" id="1.20.1270.10">
    <property type="match status" value="1"/>
</dbReference>
<dbReference type="Gene3D" id="3.30.420.40">
    <property type="match status" value="2"/>
</dbReference>
<dbReference type="Gene3D" id="3.90.640.10">
    <property type="entry name" value="Actin, Chain A, domain 4"/>
    <property type="match status" value="1"/>
</dbReference>
<dbReference type="Gene3D" id="2.60.34.10">
    <property type="entry name" value="Substrate Binding Domain Of DNAk, Chain A, domain 1"/>
    <property type="match status" value="1"/>
</dbReference>
<dbReference type="HAMAP" id="MF_00332">
    <property type="entry name" value="DnaK"/>
    <property type="match status" value="1"/>
</dbReference>
<dbReference type="InterPro" id="IPR043129">
    <property type="entry name" value="ATPase_NBD"/>
</dbReference>
<dbReference type="InterPro" id="IPR012725">
    <property type="entry name" value="Chaperone_DnaK"/>
</dbReference>
<dbReference type="InterPro" id="IPR018181">
    <property type="entry name" value="Heat_shock_70_CS"/>
</dbReference>
<dbReference type="InterPro" id="IPR029048">
    <property type="entry name" value="HSP70_C_sf"/>
</dbReference>
<dbReference type="InterPro" id="IPR029047">
    <property type="entry name" value="HSP70_peptide-bd_sf"/>
</dbReference>
<dbReference type="InterPro" id="IPR013126">
    <property type="entry name" value="Hsp_70_fam"/>
</dbReference>
<dbReference type="NCBIfam" id="NF001413">
    <property type="entry name" value="PRK00290.1"/>
    <property type="match status" value="1"/>
</dbReference>
<dbReference type="NCBIfam" id="TIGR02350">
    <property type="entry name" value="prok_dnaK"/>
    <property type="match status" value="1"/>
</dbReference>
<dbReference type="PANTHER" id="PTHR19375">
    <property type="entry name" value="HEAT SHOCK PROTEIN 70KDA"/>
    <property type="match status" value="1"/>
</dbReference>
<dbReference type="Pfam" id="PF00012">
    <property type="entry name" value="HSP70"/>
    <property type="match status" value="1"/>
</dbReference>
<dbReference type="PRINTS" id="PR00301">
    <property type="entry name" value="HEATSHOCK70"/>
</dbReference>
<dbReference type="SUPFAM" id="SSF53067">
    <property type="entry name" value="Actin-like ATPase domain"/>
    <property type="match status" value="2"/>
</dbReference>
<dbReference type="SUPFAM" id="SSF100920">
    <property type="entry name" value="Heat shock protein 70kD (HSP70), peptide-binding domain"/>
    <property type="match status" value="1"/>
</dbReference>
<dbReference type="PROSITE" id="PS00297">
    <property type="entry name" value="HSP70_1"/>
    <property type="match status" value="1"/>
</dbReference>
<dbReference type="PROSITE" id="PS00329">
    <property type="entry name" value="HSP70_2"/>
    <property type="match status" value="1"/>
</dbReference>
<dbReference type="PROSITE" id="PS01036">
    <property type="entry name" value="HSP70_3"/>
    <property type="match status" value="1"/>
</dbReference>
<organism>
    <name type="scientific">Carsonella ruddii (strain PV)</name>
    <dbReference type="NCBI Taxonomy" id="387662"/>
    <lineage>
        <taxon>Bacteria</taxon>
        <taxon>Pseudomonadati</taxon>
        <taxon>Pseudomonadota</taxon>
        <taxon>Gammaproteobacteria</taxon>
        <taxon>Oceanospirillales</taxon>
        <taxon>Halomonadaceae</taxon>
        <taxon>Zymobacter group</taxon>
        <taxon>Candidatus Carsonella</taxon>
    </lineage>
</organism>
<keyword id="KW-0067">ATP-binding</keyword>
<keyword id="KW-0143">Chaperone</keyword>
<keyword id="KW-0547">Nucleotide-binding</keyword>
<keyword id="KW-0597">Phosphoprotein</keyword>
<keyword id="KW-0346">Stress response</keyword>
<reference key="1">
    <citation type="journal article" date="2006" name="Science">
        <title>The 160-kilobase genome of the bacterial endosymbiont Carsonella.</title>
        <authorList>
            <person name="Nakabachi A."/>
            <person name="Yamashita A."/>
            <person name="Toh H."/>
            <person name="Ishikawa H."/>
            <person name="Dunbar H.E."/>
            <person name="Moran N.A."/>
            <person name="Hattori M."/>
        </authorList>
    </citation>
    <scope>NUCLEOTIDE SEQUENCE [LARGE SCALE GENOMIC DNA]</scope>
    <source>
        <strain>PV</strain>
    </source>
</reference>
<protein>
    <recommendedName>
        <fullName evidence="1">Chaperone protein DnaK</fullName>
    </recommendedName>
    <alternativeName>
        <fullName evidence="1">HSP70</fullName>
    </alternativeName>
    <alternativeName>
        <fullName evidence="1">Heat shock 70 kDa protein</fullName>
    </alternativeName>
    <alternativeName>
        <fullName evidence="1">Heat shock protein 70</fullName>
    </alternativeName>
</protein>
<feature type="chain" id="PRO_1000059533" description="Chaperone protein DnaK">
    <location>
        <begin position="1"/>
        <end position="602"/>
    </location>
</feature>
<feature type="modified residue" description="Phosphothreonine; by autocatalysis" evidence="1">
    <location>
        <position position="199"/>
    </location>
</feature>
<name>DNAK_CARRP</name>
<sequence length="602" mass="66120">MSKIIGIDLGTTNSCIAVLSNGKPQVIENSEGGRTTPSVVGYTEDNRIIVGLPAKRQAITNPKNTLYAIKRLIGRKFKDDIVQKDIKMVPYKIISSENGDAWVEVKDKKLAPPQISAEILKKMKITAENFLNEKVTKAVITVPAYFNDSQRQATKDAGKIAGLEVLRIINEPTAAALAYGLDKKKNDRIIAVYDLGGGTFDISIIEIANVDGETQFEVLSTNGDTFLGGEDFDIRIINNLIYEFKIENGINLSGDSLAMQRLKEAAEKAKIELSSVEQTDINLPYITADKNGPKHLNIKITRSKLESLVEDLILKSLKPCEIALNDAKISKNKIDEIILVGGQTRMPLVQKMVSDFFEKVVKKDINPDEAVAIGASVQAGVLSGVVKDVLLLDVTPLTLGIETMGGIMTPLIEKNTTIPTKKTQVFSTAEDNQTSVTIHTLQGERKKALQNKSLGKFDLNNISPAPRGVPQIEVSFDLDANGILNVTAKDKKTGVEQSIVIKSSGGLSELEIENMIKDAEANLEIDKKFEELVKCRNEADSTISIVKKKLKDENLKILDEERVSIEKSISNLELLIKGDDIDSIKKENEELLKLSDNIIKKK</sequence>
<evidence type="ECO:0000255" key="1">
    <source>
        <dbReference type="HAMAP-Rule" id="MF_00332"/>
    </source>
</evidence>